<feature type="chain" id="PRO_0000132386" description="Small ribosomal subunit protein uS4">
    <location>
        <begin position="1"/>
        <end position="195"/>
    </location>
</feature>
<feature type="domain" description="S4 RNA-binding" evidence="1">
    <location>
        <begin position="88"/>
        <end position="150"/>
    </location>
</feature>
<gene>
    <name evidence="1" type="primary">rpsD</name>
    <name type="ordered locus">FN1284</name>
</gene>
<comment type="function">
    <text evidence="1">One of the primary rRNA binding proteins, it binds directly to 16S rRNA where it nucleates assembly of the body of the 30S subunit.</text>
</comment>
<comment type="function">
    <text evidence="1">With S5 and S12 plays an important role in translational accuracy.</text>
</comment>
<comment type="subunit">
    <text evidence="1">Part of the 30S ribosomal subunit. Contacts protein S5. The interaction surface between S4 and S5 is involved in control of translational fidelity.</text>
</comment>
<comment type="similarity">
    <text evidence="1">Belongs to the universal ribosomal protein uS4 family.</text>
</comment>
<sequence>MARNRQPVLKKCRALGIDPVILGVKKSSNRQIRPNANKKPTEYATQLREKQKAKFIYNVMEKQFRKIYEEAARKLGVTGLTLIEYLERRLENVVYRLGFAKTRRQARQIVSHGHIAVNGRRVNIASFRVKVGDIVSVIENSKNVELIKLAVEDATPPAWLELDRAAFSGKVLQNPTKDDLDFDLNESLIVEFYSR</sequence>
<organism>
    <name type="scientific">Fusobacterium nucleatum subsp. nucleatum (strain ATCC 25586 / DSM 15643 / BCRC 10681 / CIP 101130 / JCM 8532 / KCTC 2640 / LMG 13131 / VPI 4355)</name>
    <dbReference type="NCBI Taxonomy" id="190304"/>
    <lineage>
        <taxon>Bacteria</taxon>
        <taxon>Fusobacteriati</taxon>
        <taxon>Fusobacteriota</taxon>
        <taxon>Fusobacteriia</taxon>
        <taxon>Fusobacteriales</taxon>
        <taxon>Fusobacteriaceae</taxon>
        <taxon>Fusobacterium</taxon>
    </lineage>
</organism>
<evidence type="ECO:0000255" key="1">
    <source>
        <dbReference type="HAMAP-Rule" id="MF_01306"/>
    </source>
</evidence>
<evidence type="ECO:0000305" key="2"/>
<reference key="1">
    <citation type="journal article" date="2002" name="J. Bacteriol.">
        <title>Genome sequence and analysis of the oral bacterium Fusobacterium nucleatum strain ATCC 25586.</title>
        <authorList>
            <person name="Kapatral V."/>
            <person name="Anderson I."/>
            <person name="Ivanova N."/>
            <person name="Reznik G."/>
            <person name="Los T."/>
            <person name="Lykidis A."/>
            <person name="Bhattacharyya A."/>
            <person name="Bartman A."/>
            <person name="Gardner W."/>
            <person name="Grechkin G."/>
            <person name="Zhu L."/>
            <person name="Vasieva O."/>
            <person name="Chu L."/>
            <person name="Kogan Y."/>
            <person name="Chaga O."/>
            <person name="Goltsman E."/>
            <person name="Bernal A."/>
            <person name="Larsen N."/>
            <person name="D'Souza M."/>
            <person name="Walunas T."/>
            <person name="Pusch G."/>
            <person name="Haselkorn R."/>
            <person name="Fonstein M."/>
            <person name="Kyrpides N.C."/>
            <person name="Overbeek R."/>
        </authorList>
    </citation>
    <scope>NUCLEOTIDE SEQUENCE [LARGE SCALE GENOMIC DNA]</scope>
    <source>
        <strain>ATCC 25586 / DSM 15643 / BCRC 10681 / CIP 101130 / JCM 8532 / KCTC 2640 / LMG 13131 / VPI 4355</strain>
    </source>
</reference>
<keyword id="KW-1185">Reference proteome</keyword>
<keyword id="KW-0687">Ribonucleoprotein</keyword>
<keyword id="KW-0689">Ribosomal protein</keyword>
<keyword id="KW-0694">RNA-binding</keyword>
<keyword id="KW-0699">rRNA-binding</keyword>
<accession>Q8RE43</accession>
<dbReference type="EMBL" id="AE009951">
    <property type="protein sequence ID" value="AAL95480.1"/>
    <property type="molecule type" value="Genomic_DNA"/>
</dbReference>
<dbReference type="RefSeq" id="NP_604181.1">
    <property type="nucleotide sequence ID" value="NC_003454.1"/>
</dbReference>
<dbReference type="RefSeq" id="WP_005903916.1">
    <property type="nucleotide sequence ID" value="NZ_OZ209243.1"/>
</dbReference>
<dbReference type="SMR" id="Q8RE43"/>
<dbReference type="FunCoup" id="Q8RE43">
    <property type="interactions" value="405"/>
</dbReference>
<dbReference type="STRING" id="190304.FN1284"/>
<dbReference type="PaxDb" id="190304-FN1284"/>
<dbReference type="EnsemblBacteria" id="AAL95480">
    <property type="protein sequence ID" value="AAL95480"/>
    <property type="gene ID" value="FN1284"/>
</dbReference>
<dbReference type="GeneID" id="79784260"/>
<dbReference type="KEGG" id="fnu:FN1284"/>
<dbReference type="PATRIC" id="fig|190304.8.peg.1849"/>
<dbReference type="eggNOG" id="COG0522">
    <property type="taxonomic scope" value="Bacteria"/>
</dbReference>
<dbReference type="HOGENOM" id="CLU_092403_0_1_0"/>
<dbReference type="InParanoid" id="Q8RE43"/>
<dbReference type="BioCyc" id="FNUC190304:G1FZS-1860-MONOMER"/>
<dbReference type="Proteomes" id="UP000002521">
    <property type="component" value="Chromosome"/>
</dbReference>
<dbReference type="GO" id="GO:0015935">
    <property type="term" value="C:small ribosomal subunit"/>
    <property type="evidence" value="ECO:0000318"/>
    <property type="project" value="GO_Central"/>
</dbReference>
<dbReference type="GO" id="GO:0019843">
    <property type="term" value="F:rRNA binding"/>
    <property type="evidence" value="ECO:0000318"/>
    <property type="project" value="GO_Central"/>
</dbReference>
<dbReference type="GO" id="GO:0003735">
    <property type="term" value="F:structural constituent of ribosome"/>
    <property type="evidence" value="ECO:0000318"/>
    <property type="project" value="GO_Central"/>
</dbReference>
<dbReference type="GO" id="GO:0042274">
    <property type="term" value="P:ribosomal small subunit biogenesis"/>
    <property type="evidence" value="ECO:0000318"/>
    <property type="project" value="GO_Central"/>
</dbReference>
<dbReference type="GO" id="GO:0006412">
    <property type="term" value="P:translation"/>
    <property type="evidence" value="ECO:0007669"/>
    <property type="project" value="UniProtKB-UniRule"/>
</dbReference>
<dbReference type="CDD" id="cd00165">
    <property type="entry name" value="S4"/>
    <property type="match status" value="1"/>
</dbReference>
<dbReference type="FunFam" id="3.10.290.10:FF:000001">
    <property type="entry name" value="30S ribosomal protein S4"/>
    <property type="match status" value="1"/>
</dbReference>
<dbReference type="Gene3D" id="1.10.1050.10">
    <property type="entry name" value="Ribosomal Protein S4 Delta 41, Chain A, domain 1"/>
    <property type="match status" value="1"/>
</dbReference>
<dbReference type="Gene3D" id="3.10.290.10">
    <property type="entry name" value="RNA-binding S4 domain"/>
    <property type="match status" value="1"/>
</dbReference>
<dbReference type="HAMAP" id="MF_01306_B">
    <property type="entry name" value="Ribosomal_uS4_B"/>
    <property type="match status" value="1"/>
</dbReference>
<dbReference type="InterPro" id="IPR022801">
    <property type="entry name" value="Ribosomal_uS4"/>
</dbReference>
<dbReference type="InterPro" id="IPR005709">
    <property type="entry name" value="Ribosomal_uS4_bac-type"/>
</dbReference>
<dbReference type="InterPro" id="IPR018079">
    <property type="entry name" value="Ribosomal_uS4_CS"/>
</dbReference>
<dbReference type="InterPro" id="IPR001912">
    <property type="entry name" value="Ribosomal_uS4_N"/>
</dbReference>
<dbReference type="InterPro" id="IPR002942">
    <property type="entry name" value="S4_RNA-bd"/>
</dbReference>
<dbReference type="InterPro" id="IPR036986">
    <property type="entry name" value="S4_RNA-bd_sf"/>
</dbReference>
<dbReference type="NCBIfam" id="NF003717">
    <property type="entry name" value="PRK05327.1"/>
    <property type="match status" value="1"/>
</dbReference>
<dbReference type="NCBIfam" id="TIGR01017">
    <property type="entry name" value="rpsD_bact"/>
    <property type="match status" value="1"/>
</dbReference>
<dbReference type="PANTHER" id="PTHR11831">
    <property type="entry name" value="30S 40S RIBOSOMAL PROTEIN"/>
    <property type="match status" value="1"/>
</dbReference>
<dbReference type="PANTHER" id="PTHR11831:SF4">
    <property type="entry name" value="SMALL RIBOSOMAL SUBUNIT PROTEIN US4M"/>
    <property type="match status" value="1"/>
</dbReference>
<dbReference type="Pfam" id="PF00163">
    <property type="entry name" value="Ribosomal_S4"/>
    <property type="match status" value="1"/>
</dbReference>
<dbReference type="Pfam" id="PF01479">
    <property type="entry name" value="S4"/>
    <property type="match status" value="1"/>
</dbReference>
<dbReference type="SMART" id="SM01390">
    <property type="entry name" value="Ribosomal_S4"/>
    <property type="match status" value="1"/>
</dbReference>
<dbReference type="SMART" id="SM00363">
    <property type="entry name" value="S4"/>
    <property type="match status" value="1"/>
</dbReference>
<dbReference type="SUPFAM" id="SSF55174">
    <property type="entry name" value="Alpha-L RNA-binding motif"/>
    <property type="match status" value="1"/>
</dbReference>
<dbReference type="PROSITE" id="PS00632">
    <property type="entry name" value="RIBOSOMAL_S4"/>
    <property type="match status" value="1"/>
</dbReference>
<dbReference type="PROSITE" id="PS50889">
    <property type="entry name" value="S4"/>
    <property type="match status" value="1"/>
</dbReference>
<protein>
    <recommendedName>
        <fullName evidence="1">Small ribosomal subunit protein uS4</fullName>
    </recommendedName>
    <alternativeName>
        <fullName evidence="2">30S ribosomal protein S4</fullName>
    </alternativeName>
</protein>
<name>RS4_FUSNN</name>
<proteinExistence type="inferred from homology"/>